<name>RCD1_SCHPO</name>
<proteinExistence type="inferred from homology"/>
<comment type="function">
    <text>A differentiation-controlling factor that is essential for the onset of sexual development. Induces ste11 when sexual development is invoked through nitrogen starvation.</text>
</comment>
<comment type="similarity">
    <text evidence="1">Belongs to the CNOT9 family.</text>
</comment>
<dbReference type="EMBL" id="D87956">
    <property type="protein sequence ID" value="BAA13507.1"/>
    <property type="molecule type" value="Genomic_DNA"/>
</dbReference>
<dbReference type="EMBL" id="CU329670">
    <property type="protein sequence ID" value="CAB16251.1"/>
    <property type="molecule type" value="Genomic_DNA"/>
</dbReference>
<dbReference type="PIR" id="T43247">
    <property type="entry name" value="T43247"/>
</dbReference>
<dbReference type="RefSeq" id="NP_594984.1">
    <property type="nucleotide sequence ID" value="NM_001020415.2"/>
</dbReference>
<dbReference type="SMR" id="Q92368"/>
<dbReference type="BioGRID" id="278571">
    <property type="interactions" value="176"/>
</dbReference>
<dbReference type="ComplexPortal" id="CPX-25774">
    <property type="entry name" value="CCR4-NOT mRNA deadenylase complex"/>
</dbReference>
<dbReference type="FunCoup" id="Q92368">
    <property type="interactions" value="493"/>
</dbReference>
<dbReference type="IntAct" id="Q92368">
    <property type="interactions" value="2"/>
</dbReference>
<dbReference type="STRING" id="284812.Q92368"/>
<dbReference type="PaxDb" id="4896-SPAC29B12.06c.1"/>
<dbReference type="EnsemblFungi" id="SPAC29B12.06c.1">
    <property type="protein sequence ID" value="SPAC29B12.06c.1:pep"/>
    <property type="gene ID" value="SPAC29B12.06c"/>
</dbReference>
<dbReference type="GeneID" id="2542094"/>
<dbReference type="KEGG" id="spo:2542094"/>
<dbReference type="PomBase" id="SPAC29B12.06c">
    <property type="gene designation" value="rcd1"/>
</dbReference>
<dbReference type="VEuPathDB" id="FungiDB:SPAC29B12.06c"/>
<dbReference type="eggNOG" id="KOG3036">
    <property type="taxonomic scope" value="Eukaryota"/>
</dbReference>
<dbReference type="HOGENOM" id="CLU_039962_2_0_1"/>
<dbReference type="InParanoid" id="Q92368"/>
<dbReference type="OMA" id="IFIVQKF"/>
<dbReference type="PhylomeDB" id="Q92368"/>
<dbReference type="PRO" id="PR:Q92368"/>
<dbReference type="Proteomes" id="UP000002485">
    <property type="component" value="Chromosome I"/>
</dbReference>
<dbReference type="GO" id="GO:0030014">
    <property type="term" value="C:CCR4-NOT complex"/>
    <property type="evidence" value="ECO:0000314"/>
    <property type="project" value="PomBase"/>
</dbReference>
<dbReference type="GO" id="GO:0030015">
    <property type="term" value="C:CCR4-NOT core complex"/>
    <property type="evidence" value="ECO:0000314"/>
    <property type="project" value="PomBase"/>
</dbReference>
<dbReference type="GO" id="GO:0005737">
    <property type="term" value="C:cytoplasm"/>
    <property type="evidence" value="ECO:0007005"/>
    <property type="project" value="PomBase"/>
</dbReference>
<dbReference type="GO" id="GO:0033620">
    <property type="term" value="C:Mei2 nuclear dot complex"/>
    <property type="evidence" value="ECO:0000314"/>
    <property type="project" value="PomBase"/>
</dbReference>
<dbReference type="GO" id="GO:0005634">
    <property type="term" value="C:nucleus"/>
    <property type="evidence" value="ECO:0007005"/>
    <property type="project" value="PomBase"/>
</dbReference>
<dbReference type="GO" id="GO:0000932">
    <property type="term" value="C:P-body"/>
    <property type="evidence" value="ECO:0000318"/>
    <property type="project" value="GO_Central"/>
</dbReference>
<dbReference type="GO" id="GO:0003723">
    <property type="term" value="F:RNA binding"/>
    <property type="evidence" value="ECO:0000303"/>
    <property type="project" value="PomBase"/>
</dbReference>
<dbReference type="GO" id="GO:0030154">
    <property type="term" value="P:cell differentiation"/>
    <property type="evidence" value="ECO:0007669"/>
    <property type="project" value="UniProtKB-KW"/>
</dbReference>
<dbReference type="GO" id="GO:0017148">
    <property type="term" value="P:negative regulation of translation"/>
    <property type="evidence" value="ECO:0000318"/>
    <property type="project" value="GO_Central"/>
</dbReference>
<dbReference type="GO" id="GO:0000289">
    <property type="term" value="P:nuclear-transcribed mRNA poly(A) tail shortening"/>
    <property type="evidence" value="ECO:0000314"/>
    <property type="project" value="PomBase"/>
</dbReference>
<dbReference type="FunFam" id="1.25.10.10:FF:000014">
    <property type="entry name" value="Cell differentiation protein RCD1"/>
    <property type="match status" value="1"/>
</dbReference>
<dbReference type="Gene3D" id="1.25.10.10">
    <property type="entry name" value="Leucine-rich Repeat Variant"/>
    <property type="match status" value="1"/>
</dbReference>
<dbReference type="InterPro" id="IPR011989">
    <property type="entry name" value="ARM-like"/>
</dbReference>
<dbReference type="InterPro" id="IPR016024">
    <property type="entry name" value="ARM-type_fold"/>
</dbReference>
<dbReference type="InterPro" id="IPR007216">
    <property type="entry name" value="CNOT9"/>
</dbReference>
<dbReference type="PANTHER" id="PTHR12262">
    <property type="entry name" value="CCR4-NOT TRANSCRIPTION COMPLEX SUBUNIT 9"/>
    <property type="match status" value="1"/>
</dbReference>
<dbReference type="Pfam" id="PF04078">
    <property type="entry name" value="Rcd1"/>
    <property type="match status" value="1"/>
</dbReference>
<dbReference type="SUPFAM" id="SSF48371">
    <property type="entry name" value="ARM repeat"/>
    <property type="match status" value="1"/>
</dbReference>
<keyword id="KW-0221">Differentiation</keyword>
<keyword id="KW-1185">Reference proteome</keyword>
<organism>
    <name type="scientific">Schizosaccharomyces pombe (strain 972 / ATCC 24843)</name>
    <name type="common">Fission yeast</name>
    <dbReference type="NCBI Taxonomy" id="284812"/>
    <lineage>
        <taxon>Eukaryota</taxon>
        <taxon>Fungi</taxon>
        <taxon>Dikarya</taxon>
        <taxon>Ascomycota</taxon>
        <taxon>Taphrinomycotina</taxon>
        <taxon>Schizosaccharomycetes</taxon>
        <taxon>Schizosaccharomycetales</taxon>
        <taxon>Schizosaccharomycetaceae</taxon>
        <taxon>Schizosaccharomyces</taxon>
    </lineage>
</organism>
<accession>Q92368</accession>
<reference key="1">
    <citation type="journal article" date="1998" name="Mol. Cell. Biol.">
        <title>Novel factor highly conserved among eukaryotes controls sexual development in fission yeast.</title>
        <authorList>
            <person name="Okazaki N."/>
            <person name="Okazaki K."/>
            <person name="Watanabe Y."/>
            <person name="Kato-Hayashi M."/>
            <person name="Yamamoto M."/>
            <person name="Okayama H."/>
        </authorList>
    </citation>
    <scope>NUCLEOTIDE SEQUENCE [GENOMIC DNA]</scope>
</reference>
<reference key="2">
    <citation type="journal article" date="2002" name="Nature">
        <title>The genome sequence of Schizosaccharomyces pombe.</title>
        <authorList>
            <person name="Wood V."/>
            <person name="Gwilliam R."/>
            <person name="Rajandream M.A."/>
            <person name="Lyne M.H."/>
            <person name="Lyne R."/>
            <person name="Stewart A."/>
            <person name="Sgouros J.G."/>
            <person name="Peat N."/>
            <person name="Hayles J."/>
            <person name="Baker S.G."/>
            <person name="Basham D."/>
            <person name="Bowman S."/>
            <person name="Brooks K."/>
            <person name="Brown D."/>
            <person name="Brown S."/>
            <person name="Chillingworth T."/>
            <person name="Churcher C.M."/>
            <person name="Collins M."/>
            <person name="Connor R."/>
            <person name="Cronin A."/>
            <person name="Davis P."/>
            <person name="Feltwell T."/>
            <person name="Fraser A."/>
            <person name="Gentles S."/>
            <person name="Goble A."/>
            <person name="Hamlin N."/>
            <person name="Harris D.E."/>
            <person name="Hidalgo J."/>
            <person name="Hodgson G."/>
            <person name="Holroyd S."/>
            <person name="Hornsby T."/>
            <person name="Howarth S."/>
            <person name="Huckle E.J."/>
            <person name="Hunt S."/>
            <person name="Jagels K."/>
            <person name="James K.D."/>
            <person name="Jones L."/>
            <person name="Jones M."/>
            <person name="Leather S."/>
            <person name="McDonald S."/>
            <person name="McLean J."/>
            <person name="Mooney P."/>
            <person name="Moule S."/>
            <person name="Mungall K.L."/>
            <person name="Murphy L.D."/>
            <person name="Niblett D."/>
            <person name="Odell C."/>
            <person name="Oliver K."/>
            <person name="O'Neil S."/>
            <person name="Pearson D."/>
            <person name="Quail M.A."/>
            <person name="Rabbinowitsch E."/>
            <person name="Rutherford K.M."/>
            <person name="Rutter S."/>
            <person name="Saunders D."/>
            <person name="Seeger K."/>
            <person name="Sharp S."/>
            <person name="Skelton J."/>
            <person name="Simmonds M.N."/>
            <person name="Squares R."/>
            <person name="Squares S."/>
            <person name="Stevens K."/>
            <person name="Taylor K."/>
            <person name="Taylor R.G."/>
            <person name="Tivey A."/>
            <person name="Walsh S.V."/>
            <person name="Warren T."/>
            <person name="Whitehead S."/>
            <person name="Woodward J.R."/>
            <person name="Volckaert G."/>
            <person name="Aert R."/>
            <person name="Robben J."/>
            <person name="Grymonprez B."/>
            <person name="Weltjens I."/>
            <person name="Vanstreels E."/>
            <person name="Rieger M."/>
            <person name="Schaefer M."/>
            <person name="Mueller-Auer S."/>
            <person name="Gabel C."/>
            <person name="Fuchs M."/>
            <person name="Duesterhoeft A."/>
            <person name="Fritzc C."/>
            <person name="Holzer E."/>
            <person name="Moestl D."/>
            <person name="Hilbert H."/>
            <person name="Borzym K."/>
            <person name="Langer I."/>
            <person name="Beck A."/>
            <person name="Lehrach H."/>
            <person name="Reinhardt R."/>
            <person name="Pohl T.M."/>
            <person name="Eger P."/>
            <person name="Zimmermann W."/>
            <person name="Wedler H."/>
            <person name="Wambutt R."/>
            <person name="Purnelle B."/>
            <person name="Goffeau A."/>
            <person name="Cadieu E."/>
            <person name="Dreano S."/>
            <person name="Gloux S."/>
            <person name="Lelaure V."/>
            <person name="Mottier S."/>
            <person name="Galibert F."/>
            <person name="Aves S.J."/>
            <person name="Xiang Z."/>
            <person name="Hunt C."/>
            <person name="Moore K."/>
            <person name="Hurst S.M."/>
            <person name="Lucas M."/>
            <person name="Rochet M."/>
            <person name="Gaillardin C."/>
            <person name="Tallada V.A."/>
            <person name="Garzon A."/>
            <person name="Thode G."/>
            <person name="Daga R.R."/>
            <person name="Cruzado L."/>
            <person name="Jimenez J."/>
            <person name="Sanchez M."/>
            <person name="del Rey F."/>
            <person name="Benito J."/>
            <person name="Dominguez A."/>
            <person name="Revuelta J.L."/>
            <person name="Moreno S."/>
            <person name="Armstrong J."/>
            <person name="Forsburg S.L."/>
            <person name="Cerutti L."/>
            <person name="Lowe T."/>
            <person name="McCombie W.R."/>
            <person name="Paulsen I."/>
            <person name="Potashkin J."/>
            <person name="Shpakovski G.V."/>
            <person name="Ussery D."/>
            <person name="Barrell B.G."/>
            <person name="Nurse P."/>
        </authorList>
    </citation>
    <scope>NUCLEOTIDE SEQUENCE [LARGE SCALE GENOMIC DNA]</scope>
    <source>
        <strain>972 / ATCC 24843</strain>
    </source>
</reference>
<protein>
    <recommendedName>
        <fullName>Cell differentiation protein rcd1</fullName>
    </recommendedName>
</protein>
<sequence length="283" mass="32212">MENLESPNYEPALVYEWIIQLVSGTSREQALVELSRKREQYEDLALILWHSYGVMTALLQEIISVYPLLNPPTLTGPTSNRVCNALALLQCIASHPETRIHFLNAHITLFLYPFLNTLSKSKPFEYLRLTSLGVIGALVKNDSPEVINFLLSTEIIPLCLRIMENGSELSKTVAIFIVQKFLCDDVGLQYICQTYERFYAVASVLNNMVMQLVDSFAFRLLKHVIRCYLRLSDNPRAREALRHCLPEPLRDATFAQVLKDDHNTKKCLAQLLINLSDVAVVNQ</sequence>
<gene>
    <name type="primary">rcd1</name>
    <name type="ORF">SPAC29B12.06c</name>
</gene>
<feature type="chain" id="PRO_0000097199" description="Cell differentiation protein rcd1">
    <location>
        <begin position="1"/>
        <end position="283"/>
    </location>
</feature>
<evidence type="ECO:0000305" key="1"/>